<reference key="1">
    <citation type="journal article" date="2004" name="BMC Evol. Biol.">
        <title>Long branch attraction, taxon sampling, and the earliest angiosperms: Amborella or monocots?</title>
        <authorList>
            <person name="Stefanovic S."/>
            <person name="Rice D.W."/>
            <person name="Palmer J.D."/>
        </authorList>
    </citation>
    <scope>NUCLEOTIDE SEQUENCE [GENOMIC DNA]</scope>
</reference>
<feature type="chain" id="PRO_0000111272" description="Small ribosomal subunit protein bS18c">
    <location>
        <begin position="1"/>
        <end position="101"/>
    </location>
</feature>
<feature type="region of interest" description="Disordered" evidence="2">
    <location>
        <begin position="1"/>
        <end position="23"/>
    </location>
</feature>
<feature type="compositionally biased region" description="Basic residues" evidence="2">
    <location>
        <begin position="1"/>
        <end position="19"/>
    </location>
</feature>
<evidence type="ECO:0000255" key="1">
    <source>
        <dbReference type="HAMAP-Rule" id="MF_00270"/>
    </source>
</evidence>
<evidence type="ECO:0000256" key="2">
    <source>
        <dbReference type="SAM" id="MobiDB-lite"/>
    </source>
</evidence>
<evidence type="ECO:0000305" key="3"/>
<name>RR18_ACOGR</name>
<comment type="subunit">
    <text>Part of the 30S ribosomal subunit.</text>
</comment>
<comment type="subcellular location">
    <subcellularLocation>
        <location>Plastid</location>
        <location>Chloroplast</location>
    </subcellularLocation>
</comment>
<comment type="similarity">
    <text evidence="1">Belongs to the bacterial ribosomal protein bS18 family.</text>
</comment>
<proteinExistence type="inferred from homology"/>
<sequence>MDKSKQLFRKSKGSFRRRLPPIGSGDRIDYRNMSLISRFISEQGKILSRRVNRLTLKQQRLITIAIKQARILFSLPFLNNEKQFERTESIPRPTGPRSRNK</sequence>
<organism>
    <name type="scientific">Acorus gramineus</name>
    <name type="common">Dwarf sweet flag</name>
    <dbReference type="NCBI Taxonomy" id="55184"/>
    <lineage>
        <taxon>Eukaryota</taxon>
        <taxon>Viridiplantae</taxon>
        <taxon>Streptophyta</taxon>
        <taxon>Embryophyta</taxon>
        <taxon>Tracheophyta</taxon>
        <taxon>Spermatophyta</taxon>
        <taxon>Magnoliopsida</taxon>
        <taxon>Liliopsida</taxon>
        <taxon>Acoraceae</taxon>
        <taxon>Acorus</taxon>
    </lineage>
</organism>
<gene>
    <name evidence="1" type="primary">rps18</name>
</gene>
<dbReference type="EMBL" id="AY757817">
    <property type="protein sequence ID" value="AAV74358.1"/>
    <property type="molecule type" value="Genomic_DNA"/>
</dbReference>
<dbReference type="SMR" id="Q5QA75"/>
<dbReference type="GO" id="GO:0009507">
    <property type="term" value="C:chloroplast"/>
    <property type="evidence" value="ECO:0007669"/>
    <property type="project" value="UniProtKB-SubCell"/>
</dbReference>
<dbReference type="GO" id="GO:0005763">
    <property type="term" value="C:mitochondrial small ribosomal subunit"/>
    <property type="evidence" value="ECO:0007669"/>
    <property type="project" value="TreeGrafter"/>
</dbReference>
<dbReference type="GO" id="GO:0070181">
    <property type="term" value="F:small ribosomal subunit rRNA binding"/>
    <property type="evidence" value="ECO:0007669"/>
    <property type="project" value="TreeGrafter"/>
</dbReference>
<dbReference type="GO" id="GO:0003735">
    <property type="term" value="F:structural constituent of ribosome"/>
    <property type="evidence" value="ECO:0007669"/>
    <property type="project" value="InterPro"/>
</dbReference>
<dbReference type="GO" id="GO:0006412">
    <property type="term" value="P:translation"/>
    <property type="evidence" value="ECO:0007669"/>
    <property type="project" value="UniProtKB-UniRule"/>
</dbReference>
<dbReference type="FunFam" id="4.10.640.10:FF:000002">
    <property type="entry name" value="30S ribosomal protein S18, chloroplastic"/>
    <property type="match status" value="1"/>
</dbReference>
<dbReference type="Gene3D" id="4.10.640.10">
    <property type="entry name" value="Ribosomal protein S18"/>
    <property type="match status" value="1"/>
</dbReference>
<dbReference type="HAMAP" id="MF_00270">
    <property type="entry name" value="Ribosomal_bS18"/>
    <property type="match status" value="1"/>
</dbReference>
<dbReference type="InterPro" id="IPR001648">
    <property type="entry name" value="Ribosomal_bS18"/>
</dbReference>
<dbReference type="InterPro" id="IPR018275">
    <property type="entry name" value="Ribosomal_bS18_CS"/>
</dbReference>
<dbReference type="InterPro" id="IPR036870">
    <property type="entry name" value="Ribosomal_bS18_sf"/>
</dbReference>
<dbReference type="NCBIfam" id="TIGR00165">
    <property type="entry name" value="S18"/>
    <property type="match status" value="1"/>
</dbReference>
<dbReference type="PANTHER" id="PTHR13479">
    <property type="entry name" value="30S RIBOSOMAL PROTEIN S18"/>
    <property type="match status" value="1"/>
</dbReference>
<dbReference type="PANTHER" id="PTHR13479:SF40">
    <property type="entry name" value="SMALL RIBOSOMAL SUBUNIT PROTEIN BS18M"/>
    <property type="match status" value="1"/>
</dbReference>
<dbReference type="Pfam" id="PF01084">
    <property type="entry name" value="Ribosomal_S18"/>
    <property type="match status" value="1"/>
</dbReference>
<dbReference type="PRINTS" id="PR00974">
    <property type="entry name" value="RIBOSOMALS18"/>
</dbReference>
<dbReference type="SUPFAM" id="SSF46911">
    <property type="entry name" value="Ribosomal protein S18"/>
    <property type="match status" value="1"/>
</dbReference>
<dbReference type="PROSITE" id="PS00057">
    <property type="entry name" value="RIBOSOMAL_S18"/>
    <property type="match status" value="1"/>
</dbReference>
<accession>Q5QA75</accession>
<keyword id="KW-0150">Chloroplast</keyword>
<keyword id="KW-0934">Plastid</keyword>
<keyword id="KW-0687">Ribonucleoprotein</keyword>
<keyword id="KW-0689">Ribosomal protein</keyword>
<keyword id="KW-0694">RNA-binding</keyword>
<keyword id="KW-0699">rRNA-binding</keyword>
<protein>
    <recommendedName>
        <fullName evidence="1">Small ribosomal subunit protein bS18c</fullName>
    </recommendedName>
    <alternativeName>
        <fullName evidence="3">30S ribosomal protein S18, chloroplastic</fullName>
    </alternativeName>
</protein>
<geneLocation type="chloroplast"/>